<name>DER_VIBVY</name>
<proteinExistence type="inferred from homology"/>
<protein>
    <recommendedName>
        <fullName evidence="1">GTPase Der</fullName>
    </recommendedName>
    <alternativeName>
        <fullName evidence="1">GTP-binding protein EngA</fullName>
    </alternativeName>
</protein>
<sequence>MIPVVALVGRPNVGKSTLFNRLTRSRDALVADFPGLTRDRKYGQAKVGEHDFIVIDTGGIDGSEEGVETKMAEQSLAAIREADVVLFMVDGRAGLTPSDEAIAAHLRKIEKATMLVVNKVDGIDADAASADFWQLGVDEMYQIAAAHGRGVTALIERALDPFFDNLLSTNSEGEIEDLTNMEDEEAEQQEYSEEDAEESLKRLQDQPIKLAIIGRPNVGKSTLTNRILGEERVVVYDMPGTTRDSIYIPMERDGREYVLIDTAGVRRRGKVHETVEKFSVVKTLKAVEDANVVLLVIDARENISDQDLSLLGFALNAGRSIVLAVNKWDGLDNEVKENVKKELDRRLGFVDFARIHFISALHGTGVGHLFESVQEAYRSATTRVGTSVLTRIMKMATEDHQPPMVRGRRVKLKYAHAGGYNPPIVVIHGNQVRELPDSYKRYLMNYFRKSLDIMGTPIRIQFQNSDNPFENRVNKMTLSQERARKRMMSAVKNRKK</sequence>
<gene>
    <name evidence="1" type="primary">der</name>
    <name type="synonym">engA</name>
    <name type="ordered locus">VV0770</name>
</gene>
<reference key="1">
    <citation type="journal article" date="2003" name="Genome Res.">
        <title>Comparative genome analysis of Vibrio vulnificus, a marine pathogen.</title>
        <authorList>
            <person name="Chen C.-Y."/>
            <person name="Wu K.-M."/>
            <person name="Chang Y.-C."/>
            <person name="Chang C.-H."/>
            <person name="Tsai H.-C."/>
            <person name="Liao T.-L."/>
            <person name="Liu Y.-M."/>
            <person name="Chen H.-J."/>
            <person name="Shen A.B.-T."/>
            <person name="Li J.-C."/>
            <person name="Su T.-L."/>
            <person name="Shao C.-P."/>
            <person name="Lee C.-T."/>
            <person name="Hor L.-I."/>
            <person name="Tsai S.-F."/>
        </authorList>
    </citation>
    <scope>NUCLEOTIDE SEQUENCE [LARGE SCALE GENOMIC DNA]</scope>
    <source>
        <strain>YJ016</strain>
    </source>
</reference>
<dbReference type="EMBL" id="BA000037">
    <property type="protein sequence ID" value="BAC93534.1"/>
    <property type="status" value="ALT_INIT"/>
    <property type="molecule type" value="Genomic_DNA"/>
</dbReference>
<dbReference type="RefSeq" id="WP_011149607.1">
    <property type="nucleotide sequence ID" value="NC_005139.1"/>
</dbReference>
<dbReference type="SMR" id="Q7MNE7"/>
<dbReference type="STRING" id="672.VV93_v1c07160"/>
<dbReference type="KEGG" id="vvy:VV0770"/>
<dbReference type="eggNOG" id="COG1160">
    <property type="taxonomic scope" value="Bacteria"/>
</dbReference>
<dbReference type="HOGENOM" id="CLU_016077_5_0_6"/>
<dbReference type="Proteomes" id="UP000002675">
    <property type="component" value="Chromosome I"/>
</dbReference>
<dbReference type="GO" id="GO:0016887">
    <property type="term" value="F:ATP hydrolysis activity"/>
    <property type="evidence" value="ECO:0007669"/>
    <property type="project" value="InterPro"/>
</dbReference>
<dbReference type="GO" id="GO:0005525">
    <property type="term" value="F:GTP binding"/>
    <property type="evidence" value="ECO:0007669"/>
    <property type="project" value="UniProtKB-UniRule"/>
</dbReference>
<dbReference type="GO" id="GO:0043022">
    <property type="term" value="F:ribosome binding"/>
    <property type="evidence" value="ECO:0007669"/>
    <property type="project" value="TreeGrafter"/>
</dbReference>
<dbReference type="GO" id="GO:0042254">
    <property type="term" value="P:ribosome biogenesis"/>
    <property type="evidence" value="ECO:0007669"/>
    <property type="project" value="UniProtKB-KW"/>
</dbReference>
<dbReference type="CDD" id="cd01894">
    <property type="entry name" value="EngA1"/>
    <property type="match status" value="1"/>
</dbReference>
<dbReference type="CDD" id="cd01895">
    <property type="entry name" value="EngA2"/>
    <property type="match status" value="1"/>
</dbReference>
<dbReference type="FunFam" id="3.30.300.20:FF:000004">
    <property type="entry name" value="GTPase Der"/>
    <property type="match status" value="1"/>
</dbReference>
<dbReference type="FunFam" id="3.40.50.300:FF:000040">
    <property type="entry name" value="GTPase Der"/>
    <property type="match status" value="1"/>
</dbReference>
<dbReference type="FunFam" id="3.40.50.300:FF:000057">
    <property type="entry name" value="GTPase Der"/>
    <property type="match status" value="1"/>
</dbReference>
<dbReference type="Gene3D" id="3.30.300.20">
    <property type="match status" value="1"/>
</dbReference>
<dbReference type="Gene3D" id="3.40.50.300">
    <property type="entry name" value="P-loop containing nucleotide triphosphate hydrolases"/>
    <property type="match status" value="2"/>
</dbReference>
<dbReference type="HAMAP" id="MF_00195">
    <property type="entry name" value="GTPase_Der"/>
    <property type="match status" value="1"/>
</dbReference>
<dbReference type="InterPro" id="IPR003593">
    <property type="entry name" value="AAA+_ATPase"/>
</dbReference>
<dbReference type="InterPro" id="IPR031166">
    <property type="entry name" value="G_ENGA"/>
</dbReference>
<dbReference type="InterPro" id="IPR006073">
    <property type="entry name" value="GTP-bd"/>
</dbReference>
<dbReference type="InterPro" id="IPR016484">
    <property type="entry name" value="GTPase_Der"/>
</dbReference>
<dbReference type="InterPro" id="IPR032859">
    <property type="entry name" value="KH_dom-like"/>
</dbReference>
<dbReference type="InterPro" id="IPR015946">
    <property type="entry name" value="KH_dom-like_a/b"/>
</dbReference>
<dbReference type="InterPro" id="IPR027417">
    <property type="entry name" value="P-loop_NTPase"/>
</dbReference>
<dbReference type="InterPro" id="IPR005225">
    <property type="entry name" value="Small_GTP-bd"/>
</dbReference>
<dbReference type="NCBIfam" id="TIGR03594">
    <property type="entry name" value="GTPase_EngA"/>
    <property type="match status" value="1"/>
</dbReference>
<dbReference type="NCBIfam" id="TIGR00231">
    <property type="entry name" value="small_GTP"/>
    <property type="match status" value="2"/>
</dbReference>
<dbReference type="PANTHER" id="PTHR43834">
    <property type="entry name" value="GTPASE DER"/>
    <property type="match status" value="1"/>
</dbReference>
<dbReference type="PANTHER" id="PTHR43834:SF6">
    <property type="entry name" value="GTPASE DER"/>
    <property type="match status" value="1"/>
</dbReference>
<dbReference type="Pfam" id="PF14714">
    <property type="entry name" value="KH_dom-like"/>
    <property type="match status" value="1"/>
</dbReference>
<dbReference type="Pfam" id="PF01926">
    <property type="entry name" value="MMR_HSR1"/>
    <property type="match status" value="2"/>
</dbReference>
<dbReference type="PIRSF" id="PIRSF006485">
    <property type="entry name" value="GTP-binding_EngA"/>
    <property type="match status" value="1"/>
</dbReference>
<dbReference type="PRINTS" id="PR00326">
    <property type="entry name" value="GTP1OBG"/>
</dbReference>
<dbReference type="SMART" id="SM00382">
    <property type="entry name" value="AAA"/>
    <property type="match status" value="2"/>
</dbReference>
<dbReference type="SMART" id="SM00173">
    <property type="entry name" value="RAS"/>
    <property type="match status" value="1"/>
</dbReference>
<dbReference type="SUPFAM" id="SSF52540">
    <property type="entry name" value="P-loop containing nucleoside triphosphate hydrolases"/>
    <property type="match status" value="2"/>
</dbReference>
<dbReference type="PROSITE" id="PS51712">
    <property type="entry name" value="G_ENGA"/>
    <property type="match status" value="2"/>
</dbReference>
<organism>
    <name type="scientific">Vibrio vulnificus (strain YJ016)</name>
    <dbReference type="NCBI Taxonomy" id="196600"/>
    <lineage>
        <taxon>Bacteria</taxon>
        <taxon>Pseudomonadati</taxon>
        <taxon>Pseudomonadota</taxon>
        <taxon>Gammaproteobacteria</taxon>
        <taxon>Vibrionales</taxon>
        <taxon>Vibrionaceae</taxon>
        <taxon>Vibrio</taxon>
    </lineage>
</organism>
<comment type="function">
    <text evidence="1">GTPase that plays an essential role in the late steps of ribosome biogenesis.</text>
</comment>
<comment type="subunit">
    <text evidence="1">Associates with the 50S ribosomal subunit.</text>
</comment>
<comment type="similarity">
    <text evidence="1">Belongs to the TRAFAC class TrmE-Era-EngA-EngB-Septin-like GTPase superfamily. EngA (Der) GTPase family.</text>
</comment>
<comment type="sequence caution" evidence="2">
    <conflict type="erroneous initiation">
        <sequence resource="EMBL-CDS" id="BAC93534"/>
    </conflict>
    <text>Extended N-terminus.</text>
</comment>
<evidence type="ECO:0000255" key="1">
    <source>
        <dbReference type="HAMAP-Rule" id="MF_00195"/>
    </source>
</evidence>
<evidence type="ECO:0000305" key="2"/>
<keyword id="KW-0342">GTP-binding</keyword>
<keyword id="KW-0547">Nucleotide-binding</keyword>
<keyword id="KW-0677">Repeat</keyword>
<keyword id="KW-0690">Ribosome biogenesis</keyword>
<feature type="chain" id="PRO_0000179071" description="GTPase Der">
    <location>
        <begin position="1"/>
        <end position="496"/>
    </location>
</feature>
<feature type="domain" description="EngA-type G 1">
    <location>
        <begin position="3"/>
        <end position="166"/>
    </location>
</feature>
<feature type="domain" description="EngA-type G 2">
    <location>
        <begin position="208"/>
        <end position="381"/>
    </location>
</feature>
<feature type="domain" description="KH-like" evidence="1">
    <location>
        <begin position="382"/>
        <end position="466"/>
    </location>
</feature>
<feature type="binding site" evidence="1">
    <location>
        <begin position="9"/>
        <end position="16"/>
    </location>
    <ligand>
        <name>GTP</name>
        <dbReference type="ChEBI" id="CHEBI:37565"/>
        <label>1</label>
    </ligand>
</feature>
<feature type="binding site" evidence="1">
    <location>
        <begin position="56"/>
        <end position="60"/>
    </location>
    <ligand>
        <name>GTP</name>
        <dbReference type="ChEBI" id="CHEBI:37565"/>
        <label>1</label>
    </ligand>
</feature>
<feature type="binding site" evidence="1">
    <location>
        <begin position="118"/>
        <end position="121"/>
    </location>
    <ligand>
        <name>GTP</name>
        <dbReference type="ChEBI" id="CHEBI:37565"/>
        <label>1</label>
    </ligand>
</feature>
<feature type="binding site" evidence="1">
    <location>
        <begin position="214"/>
        <end position="221"/>
    </location>
    <ligand>
        <name>GTP</name>
        <dbReference type="ChEBI" id="CHEBI:37565"/>
        <label>2</label>
    </ligand>
</feature>
<feature type="binding site" evidence="1">
    <location>
        <begin position="261"/>
        <end position="265"/>
    </location>
    <ligand>
        <name>GTP</name>
        <dbReference type="ChEBI" id="CHEBI:37565"/>
        <label>2</label>
    </ligand>
</feature>
<feature type="binding site" evidence="1">
    <location>
        <begin position="326"/>
        <end position="329"/>
    </location>
    <ligand>
        <name>GTP</name>
        <dbReference type="ChEBI" id="CHEBI:37565"/>
        <label>2</label>
    </ligand>
</feature>
<accession>Q7MNE7</accession>